<keyword id="KW-0002">3D-structure</keyword>
<keyword id="KW-0106">Calcium</keyword>
<keyword id="KW-0998">Cell outer membrane</keyword>
<keyword id="KW-1015">Disulfide bond</keyword>
<keyword id="KW-0378">Hydrolase</keyword>
<keyword id="KW-0449">Lipoprotein</keyword>
<keyword id="KW-0472">Membrane</keyword>
<keyword id="KW-0479">Metal-binding</keyword>
<keyword id="KW-0564">Palmitate</keyword>
<keyword id="KW-1185">Reference proteome</keyword>
<keyword id="KW-0719">Serine esterase</keyword>
<keyword id="KW-0732">Signal</keyword>
<name>MHETH_PISS1</name>
<sequence length="603" mass="63103">MQTTVTTMLLASVALAACAGGGSTPLPLPQQQPPQQEPPPPPVPLASRAACEALKDGNGDMVWPNAATVVEVAAWRDAAPATASAAALPEHCEVSGAIAKRTGIDGYPYEIKFRLRMPAEWNGRFFMEGGSGTNGSLSAATGSIGGGQIASALSRNFATIATDGGHDNAVNDNPDALGTVAFGLDPQARLDMGYNSYDQVTQAGKAAVARFYGRAADKSYFIGCSEGGREGMMLSQRFPSHYDGIVAGAPGYQLPKAGISGAWTTQSLAPAAVGLDAQGVPLINKSFSDADLHLLSQAILGTCDALDGLADGIVDNYRACQAAFDPATAANPANGQALQCVGAKTADCLSPVQVTAIKRAMAGPVNSAGTPLYNRWAWDAGMSGLSGTTYNQGWRSWWLGSFNSSANNAQRVSGFSARSWLVDFATPPEPMPMTQVAARMMKFDFDIDPLKIWATSGQFTQSSMDWHGATSTDLAAFRDRGGKMILYHGMSDAAFSALDTADYYERLGAAMPGAAGFARLFLVPGMNHCSGGPGTDRFDMLTPLVAWVERGEAPDQISAWSGTPGYFGVAARTRPLCPYPQIARYKGSGDINTEANFACAAPP</sequence>
<gene>
    <name evidence="10" type="ORF">ISF6_0224</name>
</gene>
<organism>
    <name type="scientific">Piscinibacter sakaiensis</name>
    <name type="common">Ideonella sakaiensis</name>
    <dbReference type="NCBI Taxonomy" id="1547922"/>
    <lineage>
        <taxon>Bacteria</taxon>
        <taxon>Pseudomonadati</taxon>
        <taxon>Pseudomonadota</taxon>
        <taxon>Betaproteobacteria</taxon>
        <taxon>Burkholderiales</taxon>
        <taxon>Sphaerotilaceae</taxon>
        <taxon>Piscinibacter</taxon>
    </lineage>
</organism>
<proteinExistence type="evidence at protein level"/>
<feature type="signal peptide" evidence="2">
    <location>
        <begin position="1"/>
        <end position="17"/>
    </location>
</feature>
<feature type="chain" id="PRO_5005513859" description="Mono(2-hydroxyethyl) terephthalate hydrolase">
    <location>
        <begin position="18"/>
        <end position="603"/>
    </location>
</feature>
<feature type="region of interest" description="Disordered" evidence="3">
    <location>
        <begin position="24"/>
        <end position="44"/>
    </location>
</feature>
<feature type="compositionally biased region" description="Pro residues" evidence="3">
    <location>
        <begin position="26"/>
        <end position="44"/>
    </location>
</feature>
<feature type="active site" description="Acyl-ester intermediate" evidence="9">
    <location>
        <position position="225"/>
    </location>
</feature>
<feature type="active site" description="Charge relay system" evidence="9">
    <location>
        <position position="492"/>
    </location>
</feature>
<feature type="active site" description="Charge relay system" evidence="9">
    <location>
        <position position="528"/>
    </location>
</feature>
<feature type="binding site" evidence="9">
    <location>
        <position position="132"/>
    </location>
    <ligand>
        <name>4-[(2-hydroxyethoxy)carbonyl]benzoate</name>
        <dbReference type="ChEBI" id="CHEBI:131704"/>
    </ligand>
</feature>
<feature type="binding site" evidence="9">
    <location>
        <position position="226"/>
    </location>
    <ligand>
        <name>4-[(2-hydroxyethoxy)carbonyl]benzoate</name>
        <dbReference type="ChEBI" id="CHEBI:131704"/>
    </ligand>
</feature>
<feature type="binding site" evidence="5">
    <location>
        <position position="304"/>
    </location>
    <ligand>
        <name>Ca(2+)</name>
        <dbReference type="ChEBI" id="CHEBI:29108"/>
    </ligand>
</feature>
<feature type="binding site" evidence="5">
    <location>
        <position position="307"/>
    </location>
    <ligand>
        <name>Ca(2+)</name>
        <dbReference type="ChEBI" id="CHEBI:29108"/>
    </ligand>
</feature>
<feature type="binding site" evidence="5">
    <location>
        <position position="309"/>
    </location>
    <ligand>
        <name>Ca(2+)</name>
        <dbReference type="ChEBI" id="CHEBI:29108"/>
    </ligand>
</feature>
<feature type="binding site" evidence="5">
    <location>
        <position position="311"/>
    </location>
    <ligand>
        <name>Ca(2+)</name>
        <dbReference type="ChEBI" id="CHEBI:29108"/>
    </ligand>
</feature>
<feature type="binding site" evidence="5">
    <location>
        <position position="313"/>
    </location>
    <ligand>
        <name>Ca(2+)</name>
        <dbReference type="ChEBI" id="CHEBI:29108"/>
    </ligand>
</feature>
<feature type="binding site" evidence="9">
    <location>
        <position position="411"/>
    </location>
    <ligand>
        <name>4-[(2-hydroxyethoxy)carbonyl]benzoate</name>
        <dbReference type="ChEBI" id="CHEBI:131704"/>
    </ligand>
</feature>
<feature type="binding site" evidence="9">
    <location>
        <position position="416"/>
    </location>
    <ligand>
        <name>4-[(2-hydroxyethoxy)carbonyl]benzoate</name>
        <dbReference type="ChEBI" id="CHEBI:131704"/>
    </ligand>
</feature>
<feature type="binding site" evidence="9">
    <location>
        <position position="528"/>
    </location>
    <ligand>
        <name>4-[(2-hydroxyethoxy)carbonyl]benzoate</name>
        <dbReference type="ChEBI" id="CHEBI:131704"/>
    </ligand>
</feature>
<feature type="lipid moiety-binding region" description="N-palmitoyl cysteine" evidence="2">
    <location>
        <position position="18"/>
    </location>
</feature>
<feature type="lipid moiety-binding region" description="S-diacylglycerol cysteine" evidence="2">
    <location>
        <position position="18"/>
    </location>
</feature>
<feature type="disulfide bond" evidence="5">
    <location>
        <begin position="51"/>
        <end position="92"/>
    </location>
</feature>
<feature type="disulfide bond" evidence="5">
    <location>
        <begin position="224"/>
        <end position="529"/>
    </location>
</feature>
<feature type="disulfide bond" evidence="5">
    <location>
        <begin position="303"/>
        <end position="320"/>
    </location>
</feature>
<feature type="disulfide bond" evidence="5">
    <location>
        <begin position="340"/>
        <end position="348"/>
    </location>
</feature>
<feature type="disulfide bond" evidence="5">
    <location>
        <begin position="577"/>
        <end position="599"/>
    </location>
</feature>
<feature type="mutagenesis site" description="Loss of catalytic activity towards MHET." evidence="5">
    <original>S</original>
    <variation>A</variation>
    <location>
        <position position="225"/>
    </location>
</feature>
<feature type="mutagenesis site" description="Almost complete loss of catalytic activity towards MHET." evidence="5">
    <original>R</original>
    <variation>A</variation>
    <variation>Q</variation>
    <location>
        <position position="411"/>
    </location>
</feature>
<feature type="mutagenesis site" description="Gains a low activity towards BHET (bis-(2-hydroxyethyl) terephthalate); when associated with N-424." evidence="5">
    <original>S</original>
    <variation>A</variation>
    <location>
        <position position="416"/>
    </location>
</feature>
<feature type="mutagenesis site" description="Gains a low activity towards BHET (bis-(2-hydroxyethyl) terephthalate); when associated with A-416." evidence="5">
    <original>F</original>
    <variation>N</variation>
    <location>
        <position position="424"/>
    </location>
</feature>
<feature type="mutagenesis site" description="Loss of catalytic activity towards MHET." evidence="5">
    <original>D</original>
    <variation>A</variation>
    <location>
        <position position="492"/>
    </location>
</feature>
<feature type="mutagenesis site" description="Loss of catalytic activity towards MHET." evidence="5">
    <original>H</original>
    <variation>A</variation>
    <location>
        <position position="528"/>
    </location>
</feature>
<feature type="helix" evidence="12">
    <location>
        <begin position="48"/>
        <end position="52"/>
    </location>
</feature>
<feature type="turn" evidence="13">
    <location>
        <begin position="56"/>
        <end position="58"/>
    </location>
</feature>
<feature type="strand" evidence="12">
    <location>
        <begin position="68"/>
        <end position="76"/>
    </location>
</feature>
<feature type="strand" evidence="12">
    <location>
        <begin position="83"/>
        <end position="85"/>
    </location>
</feature>
<feature type="strand" evidence="12">
    <location>
        <begin position="90"/>
        <end position="102"/>
    </location>
</feature>
<feature type="strand" evidence="12">
    <location>
        <begin position="108"/>
        <end position="120"/>
    </location>
</feature>
<feature type="strand" evidence="12">
    <location>
        <begin position="123"/>
        <end position="128"/>
    </location>
</feature>
<feature type="helix" evidence="12">
    <location>
        <begin position="153"/>
        <end position="155"/>
    </location>
</feature>
<feature type="strand" evidence="12">
    <location>
        <begin position="158"/>
        <end position="162"/>
    </location>
</feature>
<feature type="turn" evidence="12">
    <location>
        <begin position="168"/>
        <end position="170"/>
    </location>
</feature>
<feature type="turn" evidence="12">
    <location>
        <begin position="174"/>
        <end position="177"/>
    </location>
</feature>
<feature type="helix" evidence="12">
    <location>
        <begin position="179"/>
        <end position="184"/>
    </location>
</feature>
<feature type="helix" evidence="12">
    <location>
        <begin position="186"/>
        <end position="193"/>
    </location>
</feature>
<feature type="helix" evidence="12">
    <location>
        <begin position="195"/>
        <end position="212"/>
    </location>
</feature>
<feature type="strand" evidence="12">
    <location>
        <begin position="217"/>
        <end position="224"/>
    </location>
</feature>
<feature type="helix" evidence="12">
    <location>
        <begin position="226"/>
        <end position="237"/>
    </location>
</feature>
<feature type="turn" evidence="11">
    <location>
        <begin position="239"/>
        <end position="241"/>
    </location>
</feature>
<feature type="strand" evidence="12">
    <location>
        <begin position="243"/>
        <end position="249"/>
    </location>
</feature>
<feature type="helix" evidence="12">
    <location>
        <begin position="254"/>
        <end position="256"/>
    </location>
</feature>
<feature type="helix" evidence="12">
    <location>
        <begin position="257"/>
        <end position="268"/>
    </location>
</feature>
<feature type="helix" evidence="12">
    <location>
        <begin position="269"/>
        <end position="271"/>
    </location>
</feature>
<feature type="helix" evidence="12">
    <location>
        <begin position="283"/>
        <end position="285"/>
    </location>
</feature>
<feature type="helix" evidence="12">
    <location>
        <begin position="289"/>
        <end position="303"/>
    </location>
</feature>
<feature type="helix" evidence="12">
    <location>
        <begin position="304"/>
        <end position="307"/>
    </location>
</feature>
<feature type="helix" evidence="12">
    <location>
        <begin position="317"/>
        <end position="323"/>
    </location>
</feature>
<feature type="turn" evidence="12">
    <location>
        <begin position="326"/>
        <end position="328"/>
    </location>
</feature>
<feature type="turn" evidence="12">
    <location>
        <begin position="332"/>
        <end position="334"/>
    </location>
</feature>
<feature type="strand" evidence="12">
    <location>
        <begin position="335"/>
        <end position="339"/>
    </location>
</feature>
<feature type="strand" evidence="12">
    <location>
        <begin position="341"/>
        <end position="343"/>
    </location>
</feature>
<feature type="helix" evidence="12">
    <location>
        <begin position="351"/>
        <end position="362"/>
    </location>
</feature>
<feature type="strand" evidence="12">
    <location>
        <begin position="371"/>
        <end position="373"/>
    </location>
</feature>
<feature type="helix" evidence="12">
    <location>
        <begin position="380"/>
        <end position="382"/>
    </location>
</feature>
<feature type="helix" evidence="12">
    <location>
        <begin position="395"/>
        <end position="398"/>
    </location>
</feature>
<feature type="turn" evidence="12">
    <location>
        <begin position="410"/>
        <end position="413"/>
    </location>
</feature>
<feature type="helix" evidence="12">
    <location>
        <begin position="415"/>
        <end position="423"/>
    </location>
</feature>
<feature type="strand" evidence="12">
    <location>
        <begin position="425"/>
        <end position="427"/>
    </location>
</feature>
<feature type="helix" evidence="12">
    <location>
        <begin position="433"/>
        <end position="435"/>
    </location>
</feature>
<feature type="helix" evidence="12">
    <location>
        <begin position="436"/>
        <end position="441"/>
    </location>
</feature>
<feature type="turn" evidence="12">
    <location>
        <begin position="445"/>
        <end position="447"/>
    </location>
</feature>
<feature type="helix" evidence="12">
    <location>
        <begin position="448"/>
        <end position="452"/>
    </location>
</feature>
<feature type="helix" evidence="12">
    <location>
        <begin position="463"/>
        <end position="467"/>
    </location>
</feature>
<feature type="helix" evidence="12">
    <location>
        <begin position="475"/>
        <end position="479"/>
    </location>
</feature>
<feature type="strand" evidence="12">
    <location>
        <begin position="483"/>
        <end position="489"/>
    </location>
</feature>
<feature type="strand" evidence="12">
    <location>
        <begin position="493"/>
        <end position="495"/>
    </location>
</feature>
<feature type="helix" evidence="12">
    <location>
        <begin position="497"/>
        <end position="510"/>
    </location>
</feature>
<feature type="helix" evidence="12">
    <location>
        <begin position="514"/>
        <end position="516"/>
    </location>
</feature>
<feature type="strand" evidence="12">
    <location>
        <begin position="518"/>
        <end position="523"/>
    </location>
</feature>
<feature type="strand" evidence="12">
    <location>
        <begin position="528"/>
        <end position="530"/>
    </location>
</feature>
<feature type="strand" evidence="12">
    <location>
        <begin position="532"/>
        <end position="534"/>
    </location>
</feature>
<feature type="helix" evidence="12">
    <location>
        <begin position="541"/>
        <end position="550"/>
    </location>
</feature>
<feature type="strand" evidence="12">
    <location>
        <begin position="557"/>
        <end position="560"/>
    </location>
</feature>
<feature type="helix" evidence="12">
    <location>
        <begin position="564"/>
        <end position="567"/>
    </location>
</feature>
<feature type="strand" evidence="12">
    <location>
        <begin position="573"/>
        <end position="576"/>
    </location>
</feature>
<feature type="strand" evidence="12">
    <location>
        <begin position="582"/>
        <end position="585"/>
    </location>
</feature>
<feature type="strand" evidence="12">
    <location>
        <begin position="587"/>
        <end position="589"/>
    </location>
</feature>
<feature type="helix" evidence="12">
    <location>
        <begin position="594"/>
        <end position="596"/>
    </location>
</feature>
<feature type="strand" evidence="12">
    <location>
        <begin position="597"/>
        <end position="600"/>
    </location>
</feature>
<protein>
    <recommendedName>
        <fullName evidence="6">Mono(2-hydroxyethyl) terephthalate hydrolase</fullName>
        <shortName evidence="6">MHET hydrolase</shortName>
        <shortName evidence="6">MHETase</shortName>
        <ecNumber evidence="4">3.1.1.102</ecNumber>
    </recommendedName>
</protein>
<dbReference type="EC" id="3.1.1.102" evidence="4"/>
<dbReference type="EMBL" id="BBYR01000104">
    <property type="protein sequence ID" value="GAP38911.1"/>
    <property type="molecule type" value="Genomic_DNA"/>
</dbReference>
<dbReference type="RefSeq" id="WP_054022745.1">
    <property type="nucleotide sequence ID" value="NZ_BBYR01000104.1"/>
</dbReference>
<dbReference type="PDB" id="6JTT">
    <property type="method" value="X-ray"/>
    <property type="resolution" value="2.51 A"/>
    <property type="chains" value="A/B/C=17-603"/>
</dbReference>
<dbReference type="PDB" id="6JTU">
    <property type="method" value="X-ray"/>
    <property type="resolution" value="2.10 A"/>
    <property type="chains" value="A/B/C=17-603"/>
</dbReference>
<dbReference type="PDB" id="6QG9">
    <property type="method" value="X-ray"/>
    <property type="resolution" value="2.05 A"/>
    <property type="chains" value="A/B/C/D/E/F/G/H/I/J=20-603"/>
</dbReference>
<dbReference type="PDB" id="6QGA">
    <property type="method" value="X-ray"/>
    <property type="resolution" value="2.10 A"/>
    <property type="chains" value="A/B/C/D/E/F=20-603"/>
</dbReference>
<dbReference type="PDB" id="6QGB">
    <property type="method" value="X-ray"/>
    <property type="resolution" value="2.20 A"/>
    <property type="chains" value="A/B/C/D/E/F=20-603"/>
</dbReference>
<dbReference type="PDB" id="6QZ1">
    <property type="method" value="X-ray"/>
    <property type="resolution" value="1.70 A"/>
    <property type="chains" value="A=40-603"/>
</dbReference>
<dbReference type="PDB" id="6QZ2">
    <property type="method" value="X-ray"/>
    <property type="resolution" value="1.90 A"/>
    <property type="chains" value="A/B/C/D/E/F/G/H/I/J=1-603"/>
</dbReference>
<dbReference type="PDB" id="6QZ3">
    <property type="method" value="X-ray"/>
    <property type="resolution" value="1.60 A"/>
    <property type="chains" value="A=1-603"/>
</dbReference>
<dbReference type="PDB" id="6QZ4">
    <property type="method" value="X-ray"/>
    <property type="resolution" value="1.80 A"/>
    <property type="chains" value="A/B=1-603"/>
</dbReference>
<dbReference type="PDB" id="8EKG">
    <property type="method" value="X-ray"/>
    <property type="resolution" value="2.65 A"/>
    <property type="chains" value="A/B/C/D/E/F=20-603"/>
</dbReference>
<dbReference type="PDBsum" id="6JTT"/>
<dbReference type="PDBsum" id="6JTU"/>
<dbReference type="PDBsum" id="6QG9"/>
<dbReference type="PDBsum" id="6QGA"/>
<dbReference type="PDBsum" id="6QGB"/>
<dbReference type="PDBsum" id="6QZ1"/>
<dbReference type="PDBsum" id="6QZ2"/>
<dbReference type="PDBsum" id="6QZ3"/>
<dbReference type="PDBsum" id="6QZ4"/>
<dbReference type="PDBsum" id="8EKG"/>
<dbReference type="SMR" id="A0A0K8P8E7"/>
<dbReference type="STRING" id="1547922.ISF6_0224"/>
<dbReference type="ESTHER" id="idesa-mheth">
    <property type="family name" value="Tannase"/>
</dbReference>
<dbReference type="KEGG" id="ag:GAP38911"/>
<dbReference type="OrthoDB" id="7062032at2"/>
<dbReference type="BioCyc" id="MetaCyc:MONOMER-19899"/>
<dbReference type="BRENDA" id="3.1.1.102">
    <property type="organism ID" value="14869"/>
</dbReference>
<dbReference type="SABIO-RK" id="A0A0K8P8E7"/>
<dbReference type="Proteomes" id="UP000037660">
    <property type="component" value="Unassembled WGS sequence"/>
</dbReference>
<dbReference type="GO" id="GO:0009279">
    <property type="term" value="C:cell outer membrane"/>
    <property type="evidence" value="ECO:0007669"/>
    <property type="project" value="UniProtKB-SubCell"/>
</dbReference>
<dbReference type="GO" id="GO:0052689">
    <property type="term" value="F:carboxylic ester hydrolase activity"/>
    <property type="evidence" value="ECO:0000314"/>
    <property type="project" value="UniProtKB"/>
</dbReference>
<dbReference type="GO" id="GO:0046872">
    <property type="term" value="F:metal ion binding"/>
    <property type="evidence" value="ECO:0007669"/>
    <property type="project" value="UniProtKB-KW"/>
</dbReference>
<dbReference type="GO" id="GO:0042178">
    <property type="term" value="P:xenobiotic catabolic process"/>
    <property type="evidence" value="ECO:0000314"/>
    <property type="project" value="UniProtKB"/>
</dbReference>
<dbReference type="InterPro" id="IPR029058">
    <property type="entry name" value="AB_hydrolase_fold"/>
</dbReference>
<dbReference type="InterPro" id="IPR011118">
    <property type="entry name" value="Tannase/feruloyl_esterase"/>
</dbReference>
<dbReference type="PANTHER" id="PTHR33938">
    <property type="entry name" value="FERULOYL ESTERASE B-RELATED"/>
    <property type="match status" value="1"/>
</dbReference>
<dbReference type="PANTHER" id="PTHR33938:SF15">
    <property type="entry name" value="FERULOYL ESTERASE B-RELATED"/>
    <property type="match status" value="1"/>
</dbReference>
<dbReference type="Pfam" id="PF07519">
    <property type="entry name" value="Tannase"/>
    <property type="match status" value="1"/>
</dbReference>
<dbReference type="SUPFAM" id="SSF53474">
    <property type="entry name" value="alpha/beta-Hydrolases"/>
    <property type="match status" value="2"/>
</dbReference>
<evidence type="ECO:0000250" key="1">
    <source>
        <dbReference type="UniProtKB" id="Q2UP89"/>
    </source>
</evidence>
<evidence type="ECO:0000255" key="2">
    <source>
        <dbReference type="PROSITE-ProRule" id="PRU00303"/>
    </source>
</evidence>
<evidence type="ECO:0000256" key="3">
    <source>
        <dbReference type="SAM" id="MobiDB-lite"/>
    </source>
</evidence>
<evidence type="ECO:0000269" key="4">
    <source>
    </source>
</evidence>
<evidence type="ECO:0000269" key="5">
    <source>
    </source>
</evidence>
<evidence type="ECO:0000303" key="6">
    <source>
    </source>
</evidence>
<evidence type="ECO:0000305" key="7"/>
<evidence type="ECO:0000305" key="8">
    <source>
    </source>
</evidence>
<evidence type="ECO:0000305" key="9">
    <source>
    </source>
</evidence>
<evidence type="ECO:0000312" key="10">
    <source>
        <dbReference type="EMBL" id="GAP38911.1"/>
    </source>
</evidence>
<evidence type="ECO:0007829" key="11">
    <source>
        <dbReference type="PDB" id="6QG9"/>
    </source>
</evidence>
<evidence type="ECO:0007829" key="12">
    <source>
        <dbReference type="PDB" id="6QZ3"/>
    </source>
</evidence>
<evidence type="ECO:0007829" key="13">
    <source>
        <dbReference type="PDB" id="6QZ4"/>
    </source>
</evidence>
<accession>A0A0K8P8E7</accession>
<comment type="function">
    <text evidence="4">Involved in the degradation and assimilation of the plastic poly(ethylene terephthalate) (PET), which allows I.sakaiensis to use PET as its major energy and carbon source for growth. Likely acts synergistically with PETase to depolymerize PET. Catalyzes the hydrolysis of mono(2-hydroxyethyl) terephthalate (MHET) into its two environmentally benign monomers, terephthalate and ethylene glycol. Does not show activity against PET, bis(hydroxyethyl) terephthalate (BHET), pNP-aliphatic esters or typical aromatic ester compounds catalyzed by the tannase family enzymes, such as ethyl gallate and ethyl ferulate.</text>
</comment>
<comment type="catalytic activity">
    <reaction evidence="4 5">
        <text>4-[(2-hydroxyethoxy)carbonyl]benzoate + H2O = terephthalate + ethylene glycol + H(+)</text>
        <dbReference type="Rhea" id="RHEA:49532"/>
        <dbReference type="ChEBI" id="CHEBI:15377"/>
        <dbReference type="ChEBI" id="CHEBI:15378"/>
        <dbReference type="ChEBI" id="CHEBI:30043"/>
        <dbReference type="ChEBI" id="CHEBI:30742"/>
        <dbReference type="ChEBI" id="CHEBI:131704"/>
        <dbReference type="EC" id="3.1.1.102"/>
    </reaction>
    <physiologicalReaction direction="left-to-right" evidence="4">
        <dbReference type="Rhea" id="RHEA:49533"/>
    </physiologicalReaction>
</comment>
<comment type="biophysicochemical properties">
    <kinetics>
        <KM evidence="4">7.3 uM for mono(2-hydroxyethyl) terephthalate (at pH 7 and 30 degrees Celsius)</KM>
        <text evidence="4">kcat is 31 sec(-1) for the hydrolysis of mono(2-hydroxyethyl) terephthalate (at pH 7 and 30 degrees Celsius).</text>
    </kinetics>
</comment>
<comment type="subcellular location">
    <subcellularLocation>
        <location evidence="8">Cell outer membrane</location>
        <topology evidence="2 8">Lipid-anchor</topology>
    </subcellularLocation>
</comment>
<comment type="induction">
    <text evidence="4">Highly up-regulated during growth on PET film.</text>
</comment>
<comment type="biotechnology">
    <text evidence="8">Has potential for application in environmental remediation and biological recycling of PET waste products.</text>
</comment>
<comment type="miscellaneous">
    <text evidence="1">The calcium ion is located far from the active site and appears to have a role in stabilization of the lid domain.</text>
</comment>
<comment type="similarity">
    <text evidence="7">Belongs to the tannase family.</text>
</comment>
<comment type="online information" name="Protein Spotlight">
    <link uri="https://www.proteinspotlight.org/back_issues/181/"/>
    <text>Of plastic and men - Issue 181 of July 2016</text>
</comment>
<reference key="1">
    <citation type="journal article" date="2016" name="Science">
        <title>A bacterium that degrades and assimilates poly(ethylene terephthalate).</title>
        <authorList>
            <person name="Yoshida S."/>
            <person name="Hiraga K."/>
            <person name="Takehana T."/>
            <person name="Taniguchi I."/>
            <person name="Yamaji H."/>
            <person name="Maeda Y."/>
            <person name="Toyohara K."/>
            <person name="Miyamoto K."/>
            <person name="Kimura Y."/>
            <person name="Oda K."/>
        </authorList>
    </citation>
    <scope>NUCLEOTIDE SEQUENCE [LARGE SCALE GENOMIC DNA]</scope>
    <scope>FUNCTION</scope>
    <scope>CATALYTIC ACTIVITY</scope>
    <scope>SUBSTRATE SPECIFICITY</scope>
    <scope>BIOPHYSICOCHEMICAL PROPERTIES</scope>
    <scope>SUBCELLULAR LOCATION</scope>
    <scope>INDUCTION BY PET</scope>
    <scope>BIOTECHNOLOGY</scope>
    <source>
        <strain>NBRC 110686 / NCTC 14201 / TISTR 2288 / 201-F6</strain>
    </source>
</reference>
<reference key="2">
    <citation type="journal article" date="2019" name="Nat. Commun.">
        <title>Structure of the plastic-degrading Ideonella sakaiensis MHETase bound to a substrate.</title>
        <authorList>
            <person name="Palm G.J."/>
            <person name="Reisky L."/>
            <person name="Bottcher D."/>
            <person name="Muller H."/>
            <person name="Michels E.A.P."/>
            <person name="Walczak M.C."/>
            <person name="Berndt L."/>
            <person name="Weiss M.S."/>
            <person name="Bornscheuer U.T."/>
            <person name="Weber G."/>
        </authorList>
    </citation>
    <scope>X-RAY CRYSTALLOGRAPHY (2.05 ANGSTROMS) IN COMPLEXES WITH CALCIUM; SUBSTRATE ANALOG 4-(2-HYDROXYETHYLCARBAMOYL)BENZOATE AND BENZOATE</scope>
    <scope>CATALYTIC ACTIVITY</scope>
    <scope>ACTIVE SITE</scope>
    <scope>DISULFIDE BONDS</scope>
    <scope>MUTAGENESIS OF SER-225; ARG-411; SER-416; PHE-424; ASP-492 AND HIS-528</scope>
</reference>